<sequence length="339" mass="37787">MFESVYNLPEQIQKAYEIGKNISVNVKAEDIDKVVITGLGGSAIGGNLLRVFVLDKCKIPVIVNRDYVLPAYVDSKTLVIASSYSGNTEETLSAYQDAKAKGAKIIAITTGGKLKEFAEKDGFDVITIPSGLQPRAALGYSFIPLLMLFVKLGLIEPVDDQIEETVKVLSDLRERYKPEVPEEKNLAKRLTLKLWNKLPIIYGISGTTEVIAERWKGQICENSKSPAYFNVFSELNHNEIVGTESPKHILGLFEIVMLHDTEDHKRNAIRMDITKDLIKGVVSGVNDIYSIGNSRLARMFSLIYLGDYVSLYLATLYQNDPTPVKKIDILKNKLAEIKD</sequence>
<proteinExistence type="inferred from homology"/>
<name>PGMI_CALBD</name>
<evidence type="ECO:0000250" key="1">
    <source>
        <dbReference type="UniProtKB" id="Q8ZWV0"/>
    </source>
</evidence>
<evidence type="ECO:0000255" key="2">
    <source>
        <dbReference type="PROSITE-ProRule" id="PRU00797"/>
    </source>
</evidence>
<evidence type="ECO:0000305" key="3"/>
<protein>
    <recommendedName>
        <fullName evidence="1">Bifunctional phosphoglucose/phosphomannose isomerase</fullName>
        <shortName evidence="1">Bifunctional PGI/PMI</shortName>
        <ecNumber evidence="1">5.3.1.8</ecNumber>
        <ecNumber evidence="1">5.3.1.9</ecNumber>
    </recommendedName>
    <alternativeName>
        <fullName evidence="1">Glucose-6-phosphate isomerase</fullName>
        <shortName evidence="1">GPI</shortName>
    </alternativeName>
    <alternativeName>
        <fullName evidence="1">Mannose-6-phosphate isomerase</fullName>
    </alternativeName>
</protein>
<keyword id="KW-0119">Carbohydrate metabolism</keyword>
<keyword id="KW-0413">Isomerase</keyword>
<comment type="function">
    <text evidence="1">Dual specificity isomerase that catalyzes the isomerization of both glucose-6-phosphate and mannose-6-phosphate to fructose-6-phosphate.</text>
</comment>
<comment type="catalytic activity">
    <reaction evidence="1">
        <text>alpha-D-glucose 6-phosphate = beta-D-fructose 6-phosphate</text>
        <dbReference type="Rhea" id="RHEA:11816"/>
        <dbReference type="ChEBI" id="CHEBI:57634"/>
        <dbReference type="ChEBI" id="CHEBI:58225"/>
        <dbReference type="EC" id="5.3.1.9"/>
    </reaction>
</comment>
<comment type="catalytic activity">
    <reaction evidence="1">
        <text>D-mannose 6-phosphate = D-fructose 6-phosphate</text>
        <dbReference type="Rhea" id="RHEA:12356"/>
        <dbReference type="ChEBI" id="CHEBI:58735"/>
        <dbReference type="ChEBI" id="CHEBI:61527"/>
        <dbReference type="EC" id="5.3.1.8"/>
    </reaction>
</comment>
<comment type="subunit">
    <text evidence="1">Homodimer.</text>
</comment>
<comment type="similarity">
    <text evidence="3">Belongs to the PGI/PMI family.</text>
</comment>
<comment type="sequence caution" evidence="3">
    <conflict type="erroneous initiation">
        <sequence resource="EMBL-CDS" id="ACM59743"/>
    </conflict>
</comment>
<comment type="sequence caution" evidence="3">
    <conflict type="erroneous initiation">
        <sequence resource="EMBL-CDS" id="CAA93628"/>
    </conflict>
</comment>
<accession>Q44407</accession>
<accession>B9MPI2</accession>
<reference key="1">
    <citation type="submission" date="1996-02" db="EMBL/GenBank/DDBJ databases">
        <authorList>
            <person name="Zverlov V.V."/>
            <person name="Bronnenmeier K."/>
            <person name="Velikodvorskaya G.A."/>
        </authorList>
    </citation>
    <scope>NUCLEOTIDE SEQUENCE [GENOMIC DNA]</scope>
</reference>
<reference key="2">
    <citation type="submission" date="2009-01" db="EMBL/GenBank/DDBJ databases">
        <title>Complete sequence of chromosome of Caldicellulosiruptor becscii DSM 6725.</title>
        <authorList>
            <person name="Lucas S."/>
            <person name="Copeland A."/>
            <person name="Lapidus A."/>
            <person name="Glavina del Rio T."/>
            <person name="Tice H."/>
            <person name="Bruce D."/>
            <person name="Goodwin L."/>
            <person name="Pitluck S."/>
            <person name="Sims D."/>
            <person name="Meincke L."/>
            <person name="Brettin T."/>
            <person name="Detter J.C."/>
            <person name="Han C."/>
            <person name="Larimer F."/>
            <person name="Land M."/>
            <person name="Hauser L."/>
            <person name="Kyrpides N."/>
            <person name="Ovchinnikova G."/>
            <person name="Kataeva I."/>
            <person name="Adams M.W.W."/>
        </authorList>
    </citation>
    <scope>NUCLEOTIDE SEQUENCE [LARGE SCALE GENOMIC DNA]</scope>
    <source>
        <strain>ATCC BAA-1888 / DSM 6725 / KCTC 15123 / Z-1320</strain>
    </source>
</reference>
<gene>
    <name type="ordered locus">Athe_0619</name>
</gene>
<feature type="chain" id="PRO_0000227792" description="Bifunctional phosphoglucose/phosphomannose isomerase">
    <location>
        <begin position="1"/>
        <end position="339"/>
    </location>
</feature>
<feature type="domain" description="SIS" evidence="2">
    <location>
        <begin position="22"/>
        <end position="164"/>
    </location>
</feature>
<feature type="active site" description="Proton acceptor" evidence="1">
    <location>
        <position position="221"/>
    </location>
</feature>
<feature type="active site" description="Proton donor" evidence="1">
    <location>
        <position position="237"/>
    </location>
</feature>
<feature type="active site" description="Proton acceptor" evidence="1">
    <location>
        <position position="331"/>
    </location>
</feature>
<feature type="binding site" evidence="1">
    <location>
        <position position="41"/>
    </location>
    <ligand>
        <name>D-fructose 6-phosphate</name>
        <dbReference type="ChEBI" id="CHEBI:61527"/>
    </ligand>
</feature>
<feature type="binding site" evidence="1">
    <location>
        <position position="42"/>
    </location>
    <ligand>
        <name>D-fructose 6-phosphate</name>
        <dbReference type="ChEBI" id="CHEBI:61527"/>
    </ligand>
</feature>
<feature type="binding site" evidence="1">
    <location>
        <position position="83"/>
    </location>
    <ligand>
        <name>D-fructose 6-phosphate</name>
        <dbReference type="ChEBI" id="CHEBI:61527"/>
    </ligand>
</feature>
<feature type="binding site" evidence="1">
    <location>
        <position position="85"/>
    </location>
    <ligand>
        <name>D-fructose 6-phosphate</name>
        <dbReference type="ChEBI" id="CHEBI:61527"/>
    </ligand>
</feature>
<feature type="binding site" evidence="1">
    <location>
        <position position="88"/>
    </location>
    <ligand>
        <name>D-fructose 6-phosphate</name>
        <dbReference type="ChEBI" id="CHEBI:61527"/>
    </ligand>
</feature>
<feature type="binding site" evidence="1">
    <location>
        <position position="135"/>
    </location>
    <ligand>
        <name>D-fructose 6-phosphate</name>
        <dbReference type="ChEBI" id="CHEBI:61527"/>
    </ligand>
</feature>
<feature type="binding site" evidence="1">
    <location>
        <position position="237"/>
    </location>
    <ligand>
        <name>D-fructose 6-phosphate</name>
        <dbReference type="ChEBI" id="CHEBI:61527"/>
    </ligand>
</feature>
<feature type="binding site" evidence="1">
    <location>
        <position position="331"/>
    </location>
    <ligand>
        <name>D-fructose 6-phosphate</name>
        <dbReference type="ChEBI" id="CHEBI:61527"/>
    </ligand>
</feature>
<dbReference type="EC" id="5.3.1.8" evidence="1"/>
<dbReference type="EC" id="5.3.1.9" evidence="1"/>
<dbReference type="EMBL" id="Z69782">
    <property type="protein sequence ID" value="CAA93628.1"/>
    <property type="status" value="ALT_INIT"/>
    <property type="molecule type" value="Genomic_DNA"/>
</dbReference>
<dbReference type="EMBL" id="CP001393">
    <property type="protein sequence ID" value="ACM59743.1"/>
    <property type="status" value="ALT_INIT"/>
    <property type="molecule type" value="Genomic_DNA"/>
</dbReference>
<dbReference type="RefSeq" id="WP_015907196.1">
    <property type="nucleotide sequence ID" value="NC_012034.1"/>
</dbReference>
<dbReference type="SMR" id="Q44407"/>
<dbReference type="STRING" id="521460.Athe_0619"/>
<dbReference type="GeneID" id="31771974"/>
<dbReference type="KEGG" id="ate:Athe_0619"/>
<dbReference type="eggNOG" id="COG2222">
    <property type="taxonomic scope" value="Bacteria"/>
</dbReference>
<dbReference type="HOGENOM" id="CLU_059687_0_0_9"/>
<dbReference type="Proteomes" id="UP000007723">
    <property type="component" value="Chromosome"/>
</dbReference>
<dbReference type="GO" id="GO:0097367">
    <property type="term" value="F:carbohydrate derivative binding"/>
    <property type="evidence" value="ECO:0007669"/>
    <property type="project" value="InterPro"/>
</dbReference>
<dbReference type="GO" id="GO:0004347">
    <property type="term" value="F:glucose-6-phosphate isomerase activity"/>
    <property type="evidence" value="ECO:0007669"/>
    <property type="project" value="UniProtKB-EC"/>
</dbReference>
<dbReference type="GO" id="GO:0004476">
    <property type="term" value="F:mannose-6-phosphate isomerase activity"/>
    <property type="evidence" value="ECO:0007669"/>
    <property type="project" value="UniProtKB-EC"/>
</dbReference>
<dbReference type="GO" id="GO:1901135">
    <property type="term" value="P:carbohydrate derivative metabolic process"/>
    <property type="evidence" value="ECO:0007669"/>
    <property type="project" value="InterPro"/>
</dbReference>
<dbReference type="GO" id="GO:0005975">
    <property type="term" value="P:carbohydrate metabolic process"/>
    <property type="evidence" value="ECO:0007669"/>
    <property type="project" value="InterPro"/>
</dbReference>
<dbReference type="CDD" id="cd05017">
    <property type="entry name" value="SIS_PGI_PMI_1"/>
    <property type="match status" value="1"/>
</dbReference>
<dbReference type="CDD" id="cd05637">
    <property type="entry name" value="SIS_PGI_PMI_2"/>
    <property type="match status" value="1"/>
</dbReference>
<dbReference type="Gene3D" id="3.40.50.10490">
    <property type="entry name" value="Glucose-6-phosphate isomerase like protein, domain 1"/>
    <property type="match status" value="2"/>
</dbReference>
<dbReference type="InterPro" id="IPR019490">
    <property type="entry name" value="Glu6P/Mann6P_isomerase_C"/>
</dbReference>
<dbReference type="InterPro" id="IPR001347">
    <property type="entry name" value="SIS_dom"/>
</dbReference>
<dbReference type="InterPro" id="IPR046348">
    <property type="entry name" value="SIS_dom_sf"/>
</dbReference>
<dbReference type="InterPro" id="IPR035484">
    <property type="entry name" value="SIS_PGI/PMI_1"/>
</dbReference>
<dbReference type="NCBIfam" id="TIGR02128">
    <property type="entry name" value="G6PI_arch"/>
    <property type="match status" value="1"/>
</dbReference>
<dbReference type="NCBIfam" id="NF006423">
    <property type="entry name" value="PRK08674.1-2"/>
    <property type="match status" value="1"/>
</dbReference>
<dbReference type="NCBIfam" id="NF006426">
    <property type="entry name" value="PRK08674.1-6"/>
    <property type="match status" value="1"/>
</dbReference>
<dbReference type="Pfam" id="PF10432">
    <property type="entry name" value="bact-PGI_C"/>
    <property type="match status" value="1"/>
</dbReference>
<dbReference type="Pfam" id="PF01380">
    <property type="entry name" value="SIS"/>
    <property type="match status" value="1"/>
</dbReference>
<dbReference type="SUPFAM" id="SSF53697">
    <property type="entry name" value="SIS domain"/>
    <property type="match status" value="1"/>
</dbReference>
<dbReference type="PROSITE" id="PS51464">
    <property type="entry name" value="SIS"/>
    <property type="match status" value="1"/>
</dbReference>
<organism>
    <name type="scientific">Caldicellulosiruptor bescii (strain ATCC BAA-1888 / DSM 6725 / KCTC 15123 / Z-1320)</name>
    <name type="common">Anaerocellum thermophilum</name>
    <dbReference type="NCBI Taxonomy" id="521460"/>
    <lineage>
        <taxon>Bacteria</taxon>
        <taxon>Bacillati</taxon>
        <taxon>Bacillota</taxon>
        <taxon>Bacillota incertae sedis</taxon>
        <taxon>Caldicellulosiruptorales</taxon>
        <taxon>Caldicellulosiruptoraceae</taxon>
        <taxon>Caldicellulosiruptor</taxon>
    </lineage>
</organism>